<organismHost>
    <name type="scientific">Escherichia coli</name>
    <dbReference type="NCBI Taxonomy" id="562"/>
</organismHost>
<evidence type="ECO:0000250" key="1">
    <source>
        <dbReference type="UniProtKB" id="P00581"/>
    </source>
</evidence>
<evidence type="ECO:0000303" key="2">
    <source>
    </source>
</evidence>
<evidence type="ECO:0000305" key="3"/>
<evidence type="ECO:0000312" key="4">
    <source>
        <dbReference type="Proteomes" id="UP000002006"/>
    </source>
</evidence>
<sequence>MSNPDALPFLTEMTVADIISKQAKHGVSFNRRNARWYVHLLKEIIVNIDRELIPLLPKMRLDGSTYMKPFKKSGALQKWPQAYCDRVGLKREDIGGAFTCVEYVDFDPSKDARVKEALMDEGFLPPEFNVSKKPWNTFEIKKDMRKYGTYQAWYTAWMRGNAKQKQTAEMVDADIKKFLEKHFRFKTKNYMKAYVFGLGLNPNRRNPVTFDEIKKALATSNKWPTAPTNLEETLEEGLGGELGSVGSLLKRRVVAAHRLGLISGLIAKEREDGKLSAEANSCATPTFRFKHRIVVNIPSRGLFGHECRSLFESDYNSDSDHSRPFVITNVVPDGCYIRKGTNVIYEKGKPGKKDKPVGAYKYYIPAGKEVFLGYDGSGLELRMLAHYLIKECRDMLAEAIEENNPAKKALAERGLASAIMYRDILLEGDIHSHNQKLAGLPTRDNAKTFIYAFNYGAGDAKLGSIVGGGADEGSVMRARFLAENPCIAILIDRMTEKAAQGYLIGVDGRKITMRRDATGKVMVHKALNTLLQCAGAVVMKYAMMFLNKWIEKDKVRCAKVIDMHDEGQFSVNRNDVQKLKEHTELCVKKAGEYLNMECPLASDCQIGLNWMHTH</sequence>
<reference key="1">
    <citation type="journal article" date="2008" name="J. Mol. Biol.">
        <title>Genomic and proteomic analysis of phiEco32, a novel Escherichia coli bacteriophage.</title>
        <authorList>
            <person name="Savalia D."/>
            <person name="Westblade L.F."/>
            <person name="Goel M."/>
            <person name="Florens L."/>
            <person name="Kemp P."/>
            <person name="Akulenko N."/>
            <person name="Pavlova O."/>
            <person name="Padovan J.C."/>
            <person name="Chait B.T."/>
            <person name="Washburn M.P."/>
            <person name="Ackermann H.W."/>
            <person name="Mushegian A."/>
            <person name="Gabisonia T."/>
            <person name="Molineux I."/>
            <person name="Severinov K."/>
        </authorList>
    </citation>
    <scope>NUCLEOTIDE SEQUENCE [LARGE SCALE GENOMIC DNA]</scope>
</reference>
<gene>
    <name evidence="2" type="ordered locus">53</name>
</gene>
<keyword id="KW-0235">DNA replication</keyword>
<keyword id="KW-0238">DNA-binding</keyword>
<keyword id="KW-0239">DNA-directed DNA polymerase</keyword>
<keyword id="KW-0269">Exonuclease</keyword>
<keyword id="KW-0378">Hydrolase</keyword>
<keyword id="KW-0540">Nuclease</keyword>
<keyword id="KW-0548">Nucleotidyltransferase</keyword>
<keyword id="KW-1185">Reference proteome</keyword>
<keyword id="KW-0808">Transferase</keyword>
<keyword id="KW-1194">Viral DNA replication</keyword>
<name>DPOL_BPE32</name>
<protein>
    <recommendedName>
        <fullName evidence="2">DNA-directed DNA polymerase</fullName>
        <ecNumber evidence="1">2.7.7.7</ecNumber>
        <ecNumber evidence="1">3.1.11.-</ecNumber>
    </recommendedName>
    <alternativeName>
        <fullName>DNA polymerase gp53</fullName>
    </alternativeName>
</protein>
<organism evidence="4">
    <name type="scientific">Escherichia phage Phieco32</name>
    <name type="common">Escherichia coli phage phi32</name>
    <dbReference type="NCBI Taxonomy" id="2679905"/>
    <lineage>
        <taxon>Viruses</taxon>
        <taxon>Duplodnaviria</taxon>
        <taxon>Heunggongvirae</taxon>
        <taxon>Uroviricota</taxon>
        <taxon>Caudoviricetes</taxon>
        <taxon>Gordonclarkvirinae</taxon>
        <taxon>Kuravirus</taxon>
        <taxon>Kuravirus phiEco32</taxon>
    </lineage>
</organism>
<proteinExistence type="inferred from homology"/>
<dbReference type="EC" id="2.7.7.7" evidence="1"/>
<dbReference type="EC" id="3.1.11.-" evidence="1"/>
<dbReference type="EMBL" id="EU330206">
    <property type="protein sequence ID" value="ABY52854.1"/>
    <property type="molecule type" value="Genomic_DNA"/>
</dbReference>
<dbReference type="RefSeq" id="YP_001671798.1">
    <property type="nucleotide sequence ID" value="NC_010324.1"/>
</dbReference>
<dbReference type="KEGG" id="vg:5896807"/>
<dbReference type="Proteomes" id="UP000002006">
    <property type="component" value="Genome"/>
</dbReference>
<dbReference type="GO" id="GO:0003677">
    <property type="term" value="F:DNA binding"/>
    <property type="evidence" value="ECO:0007669"/>
    <property type="project" value="UniProtKB-KW"/>
</dbReference>
<dbReference type="GO" id="GO:0003887">
    <property type="term" value="F:DNA-directed DNA polymerase activity"/>
    <property type="evidence" value="ECO:0007669"/>
    <property type="project" value="UniProtKB-KW"/>
</dbReference>
<dbReference type="GO" id="GO:0004527">
    <property type="term" value="F:exonuclease activity"/>
    <property type="evidence" value="ECO:0007669"/>
    <property type="project" value="UniProtKB-KW"/>
</dbReference>
<dbReference type="GO" id="GO:0006261">
    <property type="term" value="P:DNA-templated DNA replication"/>
    <property type="evidence" value="ECO:0007669"/>
    <property type="project" value="InterPro"/>
</dbReference>
<dbReference type="GO" id="GO:0006302">
    <property type="term" value="P:double-strand break repair"/>
    <property type="evidence" value="ECO:0007669"/>
    <property type="project" value="TreeGrafter"/>
</dbReference>
<dbReference type="GO" id="GO:0039693">
    <property type="term" value="P:viral DNA genome replication"/>
    <property type="evidence" value="ECO:0007669"/>
    <property type="project" value="UniProtKB-KW"/>
</dbReference>
<dbReference type="Gene3D" id="3.30.70.370">
    <property type="match status" value="1"/>
</dbReference>
<dbReference type="InterPro" id="IPR001098">
    <property type="entry name" value="DNA-dir_DNA_pol_A_palm_dom"/>
</dbReference>
<dbReference type="InterPro" id="IPR043502">
    <property type="entry name" value="DNA/RNA_pol_sf"/>
</dbReference>
<dbReference type="InterPro" id="IPR002298">
    <property type="entry name" value="DNA_polymerase_A"/>
</dbReference>
<dbReference type="PANTHER" id="PTHR10133">
    <property type="entry name" value="DNA POLYMERASE I"/>
    <property type="match status" value="1"/>
</dbReference>
<dbReference type="PANTHER" id="PTHR10133:SF27">
    <property type="entry name" value="DNA POLYMERASE NU"/>
    <property type="match status" value="1"/>
</dbReference>
<dbReference type="Pfam" id="PF00476">
    <property type="entry name" value="DNA_pol_A"/>
    <property type="match status" value="1"/>
</dbReference>
<dbReference type="SMART" id="SM00482">
    <property type="entry name" value="POLAc"/>
    <property type="match status" value="1"/>
</dbReference>
<dbReference type="SUPFAM" id="SSF56672">
    <property type="entry name" value="DNA/RNA polymerases"/>
    <property type="match status" value="1"/>
</dbReference>
<dbReference type="PROSITE" id="PS00447">
    <property type="entry name" value="DNA_POLYMERASE_A"/>
    <property type="match status" value="1"/>
</dbReference>
<feature type="chain" id="PRO_0000431824" description="DNA-directed DNA polymerase">
    <location>
        <begin position="1"/>
        <end position="614"/>
    </location>
</feature>
<comment type="function">
    <text evidence="1">Replicates viral genomic DNA. This polymerase possesses two enzymatic activities: DNA synthesis (polymerase) and an exonucleolytic activity that degrades single-stranded DNA in the 3'-5' direction.</text>
</comment>
<comment type="catalytic activity">
    <reaction evidence="1">
        <text>DNA(n) + a 2'-deoxyribonucleoside 5'-triphosphate = DNA(n+1) + diphosphate</text>
        <dbReference type="Rhea" id="RHEA:22508"/>
        <dbReference type="Rhea" id="RHEA-COMP:17339"/>
        <dbReference type="Rhea" id="RHEA-COMP:17340"/>
        <dbReference type="ChEBI" id="CHEBI:33019"/>
        <dbReference type="ChEBI" id="CHEBI:61560"/>
        <dbReference type="ChEBI" id="CHEBI:173112"/>
        <dbReference type="EC" id="2.7.7.7"/>
    </reaction>
</comment>
<comment type="similarity">
    <text evidence="3">Belongs to the DNA polymerase type-A family.</text>
</comment>
<accession>B0FIL5</accession>